<name>ANXA8_PANTR</name>
<keyword id="KW-0041">Annexin</keyword>
<keyword id="KW-0094">Blood coagulation</keyword>
<keyword id="KW-0106">Calcium</keyword>
<keyword id="KW-0111">Calcium/phospholipid-binding</keyword>
<keyword id="KW-0356">Hemostasis</keyword>
<keyword id="KW-0479">Metal-binding</keyword>
<keyword id="KW-1185">Reference proteome</keyword>
<keyword id="KW-0677">Repeat</keyword>
<proteinExistence type="evidence at transcript level"/>
<comment type="function">
    <text evidence="1">This protein is an anticoagulant protein that acts as an indirect inhibitor of the thromboplastin-specific complex, which is involved in the blood coagulation cascade.</text>
</comment>
<comment type="domain">
    <text evidence="1">A pair of annexin repeats may form one binding site for calcium and phospholipid.</text>
</comment>
<comment type="similarity">
    <text evidence="2 3">Belongs to the annexin family.</text>
</comment>
<protein>
    <recommendedName>
        <fullName>Annexin A8</fullName>
    </recommendedName>
    <alternativeName>
        <fullName>Annexin-8</fullName>
    </alternativeName>
</protein>
<organism>
    <name type="scientific">Pan troglodytes</name>
    <name type="common">Chimpanzee</name>
    <dbReference type="NCBI Taxonomy" id="9598"/>
    <lineage>
        <taxon>Eukaryota</taxon>
        <taxon>Metazoa</taxon>
        <taxon>Chordata</taxon>
        <taxon>Craniata</taxon>
        <taxon>Vertebrata</taxon>
        <taxon>Euteleostomi</taxon>
        <taxon>Mammalia</taxon>
        <taxon>Eutheria</taxon>
        <taxon>Euarchontoglires</taxon>
        <taxon>Primates</taxon>
        <taxon>Haplorrhini</taxon>
        <taxon>Catarrhini</taxon>
        <taxon>Hominidae</taxon>
        <taxon>Pan</taxon>
    </lineage>
</organism>
<evidence type="ECO:0000250" key="1"/>
<evidence type="ECO:0000255" key="2">
    <source>
        <dbReference type="PROSITE-ProRule" id="PRU01245"/>
    </source>
</evidence>
<evidence type="ECO:0000305" key="3"/>
<accession>A5A6L7</accession>
<sequence length="327" mass="36904">MAWWKAWIEQEGVTVKSSSHFNPDPDAETLYKAMKGIGTNEQAIIDVLTKRSNTQRQQIAKSFKAQFGKDLTETLKSELSGKFERLIVALMYPPYRYEAKELHDAMKSLGTKEGVIIEILASRTKNQLREIMKAYEEDYGSSLEEDIQADTSGYLERILVCLLQGSRDDVSSFVDPGLALQDAHDLYAAGEKIRGTDEMKFITILCTRSATHLLRVFEEYEKIANKSIEDSIKSETHGSLEEAMLTVVKCTQNLHSYFAERLYYAMKGAGTRDGTLIRNIVSRSEIDLNLIKCHFKKMYGKTLSSMIMEDTSGDYKNALLSLVGSDP</sequence>
<dbReference type="EMBL" id="AB222145">
    <property type="protein sequence ID" value="BAF62390.1"/>
    <property type="molecule type" value="mRNA"/>
</dbReference>
<dbReference type="RefSeq" id="NP_001092012.1">
    <property type="nucleotide sequence ID" value="NM_001098542.1"/>
</dbReference>
<dbReference type="SMR" id="A5A6L7"/>
<dbReference type="FunCoup" id="A5A6L7">
    <property type="interactions" value="214"/>
</dbReference>
<dbReference type="STRING" id="9598.ENSPTRP00000080833"/>
<dbReference type="PaxDb" id="9598-ENSPTRP00000058077"/>
<dbReference type="GeneID" id="450881"/>
<dbReference type="KEGG" id="ptr:450881"/>
<dbReference type="CTD" id="728113"/>
<dbReference type="eggNOG" id="KOG0819">
    <property type="taxonomic scope" value="Eukaryota"/>
</dbReference>
<dbReference type="InParanoid" id="A5A6L7"/>
<dbReference type="OrthoDB" id="10048at9604"/>
<dbReference type="Proteomes" id="UP000002277">
    <property type="component" value="Unplaced"/>
</dbReference>
<dbReference type="GO" id="GO:0005737">
    <property type="term" value="C:cytoplasm"/>
    <property type="evidence" value="ECO:0000318"/>
    <property type="project" value="GO_Central"/>
</dbReference>
<dbReference type="GO" id="GO:0042383">
    <property type="term" value="C:sarcolemma"/>
    <property type="evidence" value="ECO:0000318"/>
    <property type="project" value="GO_Central"/>
</dbReference>
<dbReference type="GO" id="GO:0012506">
    <property type="term" value="C:vesicle membrane"/>
    <property type="evidence" value="ECO:0000318"/>
    <property type="project" value="GO_Central"/>
</dbReference>
<dbReference type="GO" id="GO:0005509">
    <property type="term" value="F:calcium ion binding"/>
    <property type="evidence" value="ECO:0007669"/>
    <property type="project" value="InterPro"/>
</dbReference>
<dbReference type="GO" id="GO:0005544">
    <property type="term" value="F:calcium-dependent phospholipid binding"/>
    <property type="evidence" value="ECO:0000318"/>
    <property type="project" value="GO_Central"/>
</dbReference>
<dbReference type="GO" id="GO:0001786">
    <property type="term" value="F:phosphatidylserine binding"/>
    <property type="evidence" value="ECO:0000318"/>
    <property type="project" value="GO_Central"/>
</dbReference>
<dbReference type="GO" id="GO:0007596">
    <property type="term" value="P:blood coagulation"/>
    <property type="evidence" value="ECO:0007669"/>
    <property type="project" value="UniProtKB-KW"/>
</dbReference>
<dbReference type="GO" id="GO:0016197">
    <property type="term" value="P:endosomal transport"/>
    <property type="evidence" value="ECO:0000318"/>
    <property type="project" value="GO_Central"/>
</dbReference>
<dbReference type="GO" id="GO:0007032">
    <property type="term" value="P:endosome organization"/>
    <property type="evidence" value="ECO:0000318"/>
    <property type="project" value="GO_Central"/>
</dbReference>
<dbReference type="FunFam" id="1.10.220.10:FF:000001">
    <property type="entry name" value="Annexin"/>
    <property type="match status" value="1"/>
</dbReference>
<dbReference type="FunFam" id="1.10.220.10:FF:000002">
    <property type="entry name" value="Annexin"/>
    <property type="match status" value="1"/>
</dbReference>
<dbReference type="FunFam" id="1.10.220.10:FF:000003">
    <property type="entry name" value="Annexin"/>
    <property type="match status" value="1"/>
</dbReference>
<dbReference type="FunFam" id="1.10.220.10:FF:000004">
    <property type="entry name" value="Annexin"/>
    <property type="match status" value="1"/>
</dbReference>
<dbReference type="Gene3D" id="1.10.220.10">
    <property type="entry name" value="Annexin"/>
    <property type="match status" value="4"/>
</dbReference>
<dbReference type="InterPro" id="IPR001464">
    <property type="entry name" value="Annexin"/>
</dbReference>
<dbReference type="InterPro" id="IPR018502">
    <property type="entry name" value="Annexin_repeat"/>
</dbReference>
<dbReference type="InterPro" id="IPR018252">
    <property type="entry name" value="Annexin_repeat_CS"/>
</dbReference>
<dbReference type="InterPro" id="IPR037104">
    <property type="entry name" value="Annexin_sf"/>
</dbReference>
<dbReference type="InterPro" id="IPR009115">
    <property type="entry name" value="ANX8"/>
</dbReference>
<dbReference type="PANTHER" id="PTHR10502">
    <property type="entry name" value="ANNEXIN"/>
    <property type="match status" value="1"/>
</dbReference>
<dbReference type="PANTHER" id="PTHR10502:SF133">
    <property type="entry name" value="ANNEXIN A8-RELATED"/>
    <property type="match status" value="1"/>
</dbReference>
<dbReference type="Pfam" id="PF00191">
    <property type="entry name" value="Annexin"/>
    <property type="match status" value="4"/>
</dbReference>
<dbReference type="PRINTS" id="PR00196">
    <property type="entry name" value="ANNEXIN"/>
</dbReference>
<dbReference type="PRINTS" id="PR01808">
    <property type="entry name" value="ANNEXINVIII"/>
</dbReference>
<dbReference type="SMART" id="SM00335">
    <property type="entry name" value="ANX"/>
    <property type="match status" value="4"/>
</dbReference>
<dbReference type="SUPFAM" id="SSF47874">
    <property type="entry name" value="Annexin"/>
    <property type="match status" value="1"/>
</dbReference>
<dbReference type="PROSITE" id="PS00223">
    <property type="entry name" value="ANNEXIN_1"/>
    <property type="match status" value="4"/>
</dbReference>
<dbReference type="PROSITE" id="PS51897">
    <property type="entry name" value="ANNEXIN_2"/>
    <property type="match status" value="4"/>
</dbReference>
<reference key="1">
    <citation type="journal article" date="2007" name="Gene">
        <title>Mapping of chimpanzee full-length cDNAs onto the human genome unveils large potential divergence of the transcriptome.</title>
        <authorList>
            <person name="Sakate R."/>
            <person name="Suto Y."/>
            <person name="Imanishi T."/>
            <person name="Tanoue T."/>
            <person name="Hida M."/>
            <person name="Hayasaka I."/>
            <person name="Kusuda J."/>
            <person name="Gojobori T."/>
            <person name="Hashimoto K."/>
            <person name="Hirai M."/>
        </authorList>
    </citation>
    <scope>NUCLEOTIDE SEQUENCE [MRNA]</scope>
    <source>
        <tissue>Skin</tissue>
    </source>
</reference>
<feature type="chain" id="PRO_0000295283" description="Annexin A8">
    <location>
        <begin position="1"/>
        <end position="327"/>
    </location>
</feature>
<feature type="repeat" description="Annexin 1" evidence="2">
    <location>
        <begin position="21"/>
        <end position="92"/>
    </location>
</feature>
<feature type="repeat" description="Annexin 2" evidence="2">
    <location>
        <begin position="93"/>
        <end position="164"/>
    </location>
</feature>
<feature type="repeat" description="Annexin 3" evidence="2">
    <location>
        <begin position="177"/>
        <end position="249"/>
    </location>
</feature>
<feature type="repeat" description="Annexin 4" evidence="2">
    <location>
        <begin position="253"/>
        <end position="324"/>
    </location>
</feature>
<feature type="binding site" evidence="1">
    <location>
        <position position="266"/>
    </location>
    <ligand>
        <name>Ca(2+)</name>
        <dbReference type="ChEBI" id="CHEBI:29108"/>
    </ligand>
</feature>
<feature type="binding site" evidence="1">
    <location>
        <position position="268"/>
    </location>
    <ligand>
        <name>Ca(2+)</name>
        <dbReference type="ChEBI" id="CHEBI:29108"/>
    </ligand>
</feature>
<feature type="binding site" evidence="1">
    <location>
        <position position="270"/>
    </location>
    <ligand>
        <name>Ca(2+)</name>
        <dbReference type="ChEBI" id="CHEBI:29108"/>
    </ligand>
</feature>
<feature type="binding site" evidence="1">
    <location>
        <position position="310"/>
    </location>
    <ligand>
        <name>Ca(2+)</name>
        <dbReference type="ChEBI" id="CHEBI:29108"/>
    </ligand>
</feature>
<gene>
    <name type="primary">ANXA8</name>
</gene>